<gene>
    <name type="primary">MYB82</name>
    <name type="ordered locus">At5g52600</name>
    <name type="ORF">F6N7.8</name>
</gene>
<accession>Q9LTF7</accession>
<accession>O49804</accession>
<accession>Q9SQJ6</accession>
<accession>Q9ZTC4</accession>
<organism>
    <name type="scientific">Arabidopsis thaliana</name>
    <name type="common">Mouse-ear cress</name>
    <dbReference type="NCBI Taxonomy" id="3702"/>
    <lineage>
        <taxon>Eukaryota</taxon>
        <taxon>Viridiplantae</taxon>
        <taxon>Streptophyta</taxon>
        <taxon>Embryophyta</taxon>
        <taxon>Tracheophyta</taxon>
        <taxon>Spermatophyta</taxon>
        <taxon>Magnoliopsida</taxon>
        <taxon>eudicotyledons</taxon>
        <taxon>Gunneridae</taxon>
        <taxon>Pentapetalae</taxon>
        <taxon>rosids</taxon>
        <taxon>malvids</taxon>
        <taxon>Brassicales</taxon>
        <taxon>Brassicaceae</taxon>
        <taxon>Camelineae</taxon>
        <taxon>Arabidopsis</taxon>
    </lineage>
</organism>
<evidence type="ECO:0000255" key="1">
    <source>
        <dbReference type="PROSITE-ProRule" id="PRU00625"/>
    </source>
</evidence>
<evidence type="ECO:0000256" key="2">
    <source>
        <dbReference type="SAM" id="MobiDB-lite"/>
    </source>
</evidence>
<evidence type="ECO:0000269" key="3">
    <source>
    </source>
</evidence>
<evidence type="ECO:0000269" key="4">
    <source>
    </source>
</evidence>
<evidence type="ECO:0000269" key="5">
    <source>
    </source>
</evidence>
<evidence type="ECO:0000305" key="6"/>
<feature type="chain" id="PRO_0000358834" description="Transcription factor MYB82">
    <location>
        <begin position="1"/>
        <end position="201"/>
    </location>
</feature>
<feature type="domain" description="HTH myb-type 1" evidence="1">
    <location>
        <begin position="9"/>
        <end position="61"/>
    </location>
</feature>
<feature type="domain" description="HTH myb-type 2" evidence="1">
    <location>
        <begin position="62"/>
        <end position="116"/>
    </location>
</feature>
<feature type="DNA-binding region" description="H-T-H motif" evidence="1">
    <location>
        <begin position="37"/>
        <end position="61"/>
    </location>
</feature>
<feature type="DNA-binding region" description="H-T-H motif" evidence="1">
    <location>
        <begin position="89"/>
        <end position="112"/>
    </location>
</feature>
<feature type="region of interest" description="Disordered" evidence="2">
    <location>
        <begin position="112"/>
        <end position="133"/>
    </location>
</feature>
<feature type="sequence conflict" description="In Ref. 1; AAF14064." evidence="6" ref="1">
    <original>R</original>
    <variation>K</variation>
    <location>
        <position position="120"/>
    </location>
</feature>
<name>MYB82_ARATH</name>
<comment type="function">
    <text evidence="4">Transcription activation factor positively regulating trichomes development (PubMed:24803498). Has a function nearly equivalent to that of GL1 and can complement gl1 mutants (PubMed:24803498).</text>
</comment>
<comment type="subunit">
    <text evidence="3 4">Homodimer and heterodimer with GL1 (PubMed:24803498). Part of the WD40-bHLH-MYB complex (PubMed:24803498). Interacts with BHLH012/MYC1 and BHLH042/TT8 (PubMed:15361138). Interacts (via N-terminus) with GL1 and GL3 (PubMed:24803498).</text>
</comment>
<comment type="subcellular location">
    <subcellularLocation>
        <location evidence="4">Nucleus</location>
    </subcellularLocation>
</comment>
<comment type="tissue specificity">
    <text evidence="4">Mainly expressed in the trichomes of new leaves.</text>
</comment>
<comment type="induction">
    <text evidence="5">By auxin (IAA).</text>
</comment>
<comment type="domain">
    <text evidence="4">The N-terminal domain is necessary and sufficient for dimer formation. The C-terminal domain is responsible for the transcription activation function.</text>
</comment>
<comment type="miscellaneous">
    <text evidence="4">At least one of the two introns in the MYB82 gene is essential to the protein's trichome developmental function. The MYB-binding box (5'-TAAGCCAGTTATGTCT-3') located in the third exon of the MYB82 gene is required for MYB82 function in trichome initiation.</text>
</comment>
<reference key="1">
    <citation type="online journal article" date="1999" name="Plant Gene Register">
        <title>Cloning of three MYB-like genes from Arabidopsis thaliana.</title>
        <authorList>
            <person name="Li S.F."/>
            <person name="Heazlewood J."/>
            <person name="Parish R.W."/>
        </authorList>
        <locator>PGR99-138</locator>
    </citation>
    <scope>NUCLEOTIDE SEQUENCE [GENOMIC DNA]</scope>
</reference>
<reference key="2">
    <citation type="submission" date="2004-01" db="EMBL/GenBank/DDBJ databases">
        <title>The MYB transcription factor family in Arabidopsis: a genome-wide cloning and expression pattern analysis.</title>
        <authorList>
            <person name="Qu L.-J."/>
            <person name="Gu H."/>
        </authorList>
    </citation>
    <scope>NUCLEOTIDE SEQUENCE [MRNA]</scope>
</reference>
<reference key="3">
    <citation type="submission" date="1999-04" db="EMBL/GenBank/DDBJ databases">
        <title>Structural analysis of Arabidopsis thaliana chromosome 5. XI.</title>
        <authorList>
            <person name="Kaneko T."/>
            <person name="Katoh T."/>
            <person name="Asamizu E."/>
            <person name="Sato S."/>
            <person name="Nakamura Y."/>
            <person name="Kotani H."/>
            <person name="Tabata S."/>
        </authorList>
    </citation>
    <scope>NUCLEOTIDE SEQUENCE [LARGE SCALE GENOMIC DNA]</scope>
    <source>
        <strain>cv. Columbia</strain>
    </source>
</reference>
<reference key="4">
    <citation type="journal article" date="2017" name="Plant J.">
        <title>Araport11: a complete reannotation of the Arabidopsis thaliana reference genome.</title>
        <authorList>
            <person name="Cheng C.Y."/>
            <person name="Krishnakumar V."/>
            <person name="Chan A.P."/>
            <person name="Thibaud-Nissen F."/>
            <person name="Schobel S."/>
            <person name="Town C.D."/>
        </authorList>
    </citation>
    <scope>GENOME REANNOTATION</scope>
    <source>
        <strain>cv. Columbia</strain>
    </source>
</reference>
<reference key="5">
    <citation type="submission" date="1997-05" db="EMBL/GenBank/DDBJ databases">
        <title>One hundred R2R3-MYB genes in the genome of Arabidopsis thaliana.</title>
        <authorList>
            <person name="Romero I."/>
            <person name="Fuertes A."/>
            <person name="Benito M.J."/>
            <person name="Malpica J."/>
            <person name="Leyva A."/>
            <person name="Paz-Ares J."/>
        </authorList>
    </citation>
    <scope>NUCLEOTIDE SEQUENCE [MRNA] OF 55-99</scope>
    <source>
        <strain>cv. Landsberg erecta</strain>
    </source>
</reference>
<reference key="6">
    <citation type="journal article" date="1998" name="Plant J.">
        <title>Towards functional characterisation of the members of the R2R3-MYB gene family from Arabidopsis thaliana.</title>
        <authorList>
            <person name="Kranz H.D."/>
            <person name="Denekamp M."/>
            <person name="Greco R."/>
            <person name="Jin H.-L."/>
            <person name="Leyva A."/>
            <person name="Meissner R.C."/>
            <person name="Petroni K."/>
            <person name="Urzainqui A."/>
            <person name="Bevan M."/>
            <person name="Martin C."/>
            <person name="Smeekens S."/>
            <person name="Tonelli C."/>
            <person name="Paz-Ares J."/>
            <person name="Weisshaar B."/>
        </authorList>
    </citation>
    <scope>NUCLEOTIDE SEQUENCE [MRNA] OF 85-201</scope>
    <scope>INDUCTION</scope>
    <source>
        <strain>cv. Columbia</strain>
    </source>
</reference>
<reference key="7">
    <citation type="journal article" date="2001" name="Curr. Opin. Plant Biol.">
        <title>The R2R3-MYB gene family in Arabidopsis thaliana.</title>
        <authorList>
            <person name="Stracke R."/>
            <person name="Werber M."/>
            <person name="Weisshaar B."/>
        </authorList>
    </citation>
    <scope>GENE FAMILY</scope>
    <scope>NOMENCLATURE</scope>
</reference>
<reference key="8">
    <citation type="journal article" date="2004" name="Plant J.">
        <title>Comprehensive identification of Arabidopsis thaliana MYB transcription factors interacting with R/B-like BHLH proteins.</title>
        <authorList>
            <person name="Zimmermann I.M."/>
            <person name="Heim M.A."/>
            <person name="Weisshaar B."/>
            <person name="Uhrig J.F."/>
        </authorList>
    </citation>
    <scope>INTERACTION WITH BHLH012 AND BHLH042</scope>
</reference>
<reference key="9">
    <citation type="journal article" date="2006" name="Plant Mol. Biol.">
        <title>The MYB transcription factor superfamily of Arabidopsis: expression analysis and phylogenetic comparison with the rice MYB family.</title>
        <authorList>
            <person name="Chen Y."/>
            <person name="Yang X."/>
            <person name="He K."/>
            <person name="Liu M."/>
            <person name="Li J."/>
            <person name="Gao Z."/>
            <person name="Lin Z."/>
            <person name="Zhang Y."/>
            <person name="Wang X."/>
            <person name="Qiu X."/>
            <person name="Shen Y."/>
            <person name="Zhang L."/>
            <person name="Deng X."/>
            <person name="Luo J."/>
            <person name="Deng X.-W."/>
            <person name="Chen Z."/>
            <person name="Gu H."/>
            <person name="Qu L.-J."/>
        </authorList>
    </citation>
    <scope>GENE FAMILY</scope>
</reference>
<reference key="10">
    <citation type="journal article" date="2014" name="J. Exp. Bot.">
        <title>MYB82 functions in regulation of trichome development in Arabidopsis.</title>
        <authorList>
            <person name="Liang G."/>
            <person name="He H."/>
            <person name="Li Y."/>
            <person name="Ai Q."/>
            <person name="Yu D."/>
        </authorList>
    </citation>
    <scope>FUNCTION</scope>
    <scope>SUBCELLULAR LOCATION</scope>
    <scope>DOMAIN</scope>
    <scope>TISSUE SPECIFICITY</scope>
    <scope>INTERACTION WITH GL1 AND GL3</scope>
    <scope>SUBUNIT</scope>
    <source>
        <strain>cv. Columbia</strain>
    </source>
</reference>
<protein>
    <recommendedName>
        <fullName>Transcription factor MYB82</fullName>
    </recommendedName>
    <alternativeName>
        <fullName>Myb-related protein 82</fullName>
        <shortName>AtMYB82</shortName>
    </alternativeName>
</protein>
<keyword id="KW-0217">Developmental protein</keyword>
<keyword id="KW-0238">DNA-binding</keyword>
<keyword id="KW-0539">Nucleus</keyword>
<keyword id="KW-1185">Reference proteome</keyword>
<keyword id="KW-0677">Repeat</keyword>
<keyword id="KW-0804">Transcription</keyword>
<keyword id="KW-0805">Transcription regulation</keyword>
<sequence>MECKREEGKSYVKRGLWKPEEDMILKSYVETHGEGNWADISRRSGLKRGGKSCRLRWKNYLRPNIKRGSMSPQEQDLIIRMHKLLGNRWSLIAGRLPGRTDNEVKNYWNTHLNKKPNSRRQNAPESIVGATPFTDKPVMSTELRRSHGEGGEEESNTWMEETNHFGYDVHVGSPLPLISHYPDNTLVFDPCFSFTDFFPLL</sequence>
<proteinExistence type="evidence at protein level"/>
<dbReference type="EMBL" id="AF048841">
    <property type="protein sequence ID" value="AAF14064.1"/>
    <property type="molecule type" value="Genomic_DNA"/>
</dbReference>
<dbReference type="EMBL" id="AY519637">
    <property type="protein sequence ID" value="AAS10107.1"/>
    <property type="molecule type" value="mRNA"/>
</dbReference>
<dbReference type="EMBL" id="AB025606">
    <property type="protein sequence ID" value="BAA98078.1"/>
    <property type="molecule type" value="Genomic_DNA"/>
</dbReference>
<dbReference type="EMBL" id="CP002688">
    <property type="protein sequence ID" value="AED96239.1"/>
    <property type="molecule type" value="Genomic_DNA"/>
</dbReference>
<dbReference type="EMBL" id="Z95805">
    <property type="protein sequence ID" value="CAB09237.1"/>
    <property type="molecule type" value="mRNA"/>
</dbReference>
<dbReference type="EMBL" id="AF062912">
    <property type="protein sequence ID" value="AAC83634.2"/>
    <property type="molecule type" value="mRNA"/>
</dbReference>
<dbReference type="PIR" id="T51684">
    <property type="entry name" value="T51684"/>
</dbReference>
<dbReference type="RefSeq" id="NP_680426.1">
    <property type="nucleotide sequence ID" value="NM_148121.3"/>
</dbReference>
<dbReference type="SMR" id="Q9LTF7"/>
<dbReference type="BioGRID" id="20582">
    <property type="interactions" value="6"/>
</dbReference>
<dbReference type="FunCoup" id="Q9LTF7">
    <property type="interactions" value="1"/>
</dbReference>
<dbReference type="IntAct" id="Q9LTF7">
    <property type="interactions" value="3"/>
</dbReference>
<dbReference type="STRING" id="3702.Q9LTF7"/>
<dbReference type="PaxDb" id="3702-AT5G52600.1"/>
<dbReference type="EnsemblPlants" id="AT5G52600.1">
    <property type="protein sequence ID" value="AT5G52600.1"/>
    <property type="gene ID" value="AT5G52600"/>
</dbReference>
<dbReference type="GeneID" id="835337"/>
<dbReference type="Gramene" id="AT5G52600.1">
    <property type="protein sequence ID" value="AT5G52600.1"/>
    <property type="gene ID" value="AT5G52600"/>
</dbReference>
<dbReference type="KEGG" id="ath:AT5G52600"/>
<dbReference type="Araport" id="AT5G52600"/>
<dbReference type="TAIR" id="AT5G52600">
    <property type="gene designation" value="MYB82"/>
</dbReference>
<dbReference type="eggNOG" id="KOG0048">
    <property type="taxonomic scope" value="Eukaryota"/>
</dbReference>
<dbReference type="HOGENOM" id="CLU_028567_25_4_1"/>
<dbReference type="InParanoid" id="Q9LTF7"/>
<dbReference type="OMA" id="ESNTWME"/>
<dbReference type="PhylomeDB" id="Q9LTF7"/>
<dbReference type="PRO" id="PR:Q9LTF7"/>
<dbReference type="Proteomes" id="UP000006548">
    <property type="component" value="Chromosome 5"/>
</dbReference>
<dbReference type="ExpressionAtlas" id="Q9LTF7">
    <property type="expression patterns" value="baseline and differential"/>
</dbReference>
<dbReference type="GO" id="GO:0005634">
    <property type="term" value="C:nucleus"/>
    <property type="evidence" value="ECO:0000314"/>
    <property type="project" value="TAIR"/>
</dbReference>
<dbReference type="GO" id="GO:0003677">
    <property type="term" value="F:DNA binding"/>
    <property type="evidence" value="ECO:0007669"/>
    <property type="project" value="UniProtKB-KW"/>
</dbReference>
<dbReference type="GO" id="GO:0045893">
    <property type="term" value="P:positive regulation of DNA-templated transcription"/>
    <property type="evidence" value="ECO:0000314"/>
    <property type="project" value="TAIR"/>
</dbReference>
<dbReference type="GO" id="GO:0010026">
    <property type="term" value="P:trichome differentiation"/>
    <property type="evidence" value="ECO:0000315"/>
    <property type="project" value="TAIR"/>
</dbReference>
<dbReference type="CDD" id="cd00167">
    <property type="entry name" value="SANT"/>
    <property type="match status" value="2"/>
</dbReference>
<dbReference type="FunFam" id="1.10.10.60:FF:000015">
    <property type="entry name" value="Transcription factor RAX3"/>
    <property type="match status" value="1"/>
</dbReference>
<dbReference type="Gene3D" id="1.10.10.60">
    <property type="entry name" value="Homeodomain-like"/>
    <property type="match status" value="2"/>
</dbReference>
<dbReference type="InterPro" id="IPR009057">
    <property type="entry name" value="Homeodomain-like_sf"/>
</dbReference>
<dbReference type="InterPro" id="IPR017930">
    <property type="entry name" value="Myb_dom"/>
</dbReference>
<dbReference type="InterPro" id="IPR015495">
    <property type="entry name" value="Myb_TF_plants"/>
</dbReference>
<dbReference type="InterPro" id="IPR001005">
    <property type="entry name" value="SANT/Myb"/>
</dbReference>
<dbReference type="PANTHER" id="PTHR47998">
    <property type="entry name" value="TRANSCRIPTION FACTOR MYB51-LIKE ISOFORM X1"/>
    <property type="match status" value="1"/>
</dbReference>
<dbReference type="PANTHER" id="PTHR47998:SF43">
    <property type="entry name" value="TRANSCRIPTION FACTOR MYB82"/>
    <property type="match status" value="1"/>
</dbReference>
<dbReference type="Pfam" id="PF00249">
    <property type="entry name" value="Myb_DNA-binding"/>
    <property type="match status" value="2"/>
</dbReference>
<dbReference type="SMART" id="SM00717">
    <property type="entry name" value="SANT"/>
    <property type="match status" value="2"/>
</dbReference>
<dbReference type="SUPFAM" id="SSF46689">
    <property type="entry name" value="Homeodomain-like"/>
    <property type="match status" value="1"/>
</dbReference>
<dbReference type="PROSITE" id="PS51294">
    <property type="entry name" value="HTH_MYB"/>
    <property type="match status" value="2"/>
</dbReference>